<organism>
    <name type="scientific">Caldivirga maquilingensis (strain ATCC 700844 / DSM 13496 / JCM 10307 / IC-167)</name>
    <dbReference type="NCBI Taxonomy" id="397948"/>
    <lineage>
        <taxon>Archaea</taxon>
        <taxon>Thermoproteota</taxon>
        <taxon>Thermoprotei</taxon>
        <taxon>Thermoproteales</taxon>
        <taxon>Thermoproteaceae</taxon>
        <taxon>Caldivirga</taxon>
    </lineage>
</organism>
<keyword id="KW-0479">Metal-binding</keyword>
<keyword id="KW-1185">Reference proteome</keyword>
<keyword id="KW-0687">Ribonucleoprotein</keyword>
<keyword id="KW-0689">Ribosomal protein</keyword>
<keyword id="KW-0694">RNA-binding</keyword>
<keyword id="KW-0699">rRNA-binding</keyword>
<keyword id="KW-0862">Zinc</keyword>
<keyword id="KW-0863">Zinc-finger</keyword>
<protein>
    <recommendedName>
        <fullName evidence="1">Large ribosomal subunit protein eL24</fullName>
    </recommendedName>
    <alternativeName>
        <fullName evidence="2">50S ribosomal protein L24e</fullName>
    </alternativeName>
</protein>
<name>RL24E_CALMQ</name>
<evidence type="ECO:0000255" key="1">
    <source>
        <dbReference type="HAMAP-Rule" id="MF_00773"/>
    </source>
</evidence>
<evidence type="ECO:0000305" key="2"/>
<feature type="chain" id="PRO_1000148453" description="Large ribosomal subunit protein eL24">
    <location>
        <begin position="1"/>
        <end position="70"/>
    </location>
</feature>
<feature type="zinc finger region" description="C4-type" evidence="1">
    <location>
        <begin position="6"/>
        <end position="36"/>
    </location>
</feature>
<feature type="binding site" evidence="1">
    <location>
        <position position="6"/>
    </location>
    <ligand>
        <name>Zn(2+)</name>
        <dbReference type="ChEBI" id="CHEBI:29105"/>
    </ligand>
</feature>
<feature type="binding site" evidence="1">
    <location>
        <position position="9"/>
    </location>
    <ligand>
        <name>Zn(2+)</name>
        <dbReference type="ChEBI" id="CHEBI:29105"/>
    </ligand>
</feature>
<feature type="binding site" evidence="1">
    <location>
        <position position="32"/>
    </location>
    <ligand>
        <name>Zn(2+)</name>
        <dbReference type="ChEBI" id="CHEBI:29105"/>
    </ligand>
</feature>
<feature type="binding site" evidence="1">
    <location>
        <position position="36"/>
    </location>
    <ligand>
        <name>Zn(2+)</name>
        <dbReference type="ChEBI" id="CHEBI:29105"/>
    </ligand>
</feature>
<gene>
    <name evidence="1" type="primary">rpl24e</name>
    <name type="ordered locus">Cmaq_0311</name>
</gene>
<dbReference type="EMBL" id="CP000852">
    <property type="protein sequence ID" value="ABW01159.1"/>
    <property type="molecule type" value="Genomic_DNA"/>
</dbReference>
<dbReference type="RefSeq" id="WP_012185379.1">
    <property type="nucleotide sequence ID" value="NC_009954.1"/>
</dbReference>
<dbReference type="SMR" id="A8MB69"/>
<dbReference type="STRING" id="397948.Cmaq_0311"/>
<dbReference type="GeneID" id="5710185"/>
<dbReference type="KEGG" id="cma:Cmaq_0311"/>
<dbReference type="eggNOG" id="arCOG01950">
    <property type="taxonomic scope" value="Archaea"/>
</dbReference>
<dbReference type="HOGENOM" id="CLU_190191_0_0_2"/>
<dbReference type="OrthoDB" id="55506at2157"/>
<dbReference type="Proteomes" id="UP000001137">
    <property type="component" value="Chromosome"/>
</dbReference>
<dbReference type="GO" id="GO:1990904">
    <property type="term" value="C:ribonucleoprotein complex"/>
    <property type="evidence" value="ECO:0007669"/>
    <property type="project" value="UniProtKB-KW"/>
</dbReference>
<dbReference type="GO" id="GO:0005840">
    <property type="term" value="C:ribosome"/>
    <property type="evidence" value="ECO:0007669"/>
    <property type="project" value="UniProtKB-KW"/>
</dbReference>
<dbReference type="GO" id="GO:0019843">
    <property type="term" value="F:rRNA binding"/>
    <property type="evidence" value="ECO:0007669"/>
    <property type="project" value="UniProtKB-UniRule"/>
</dbReference>
<dbReference type="GO" id="GO:0003735">
    <property type="term" value="F:structural constituent of ribosome"/>
    <property type="evidence" value="ECO:0007669"/>
    <property type="project" value="InterPro"/>
</dbReference>
<dbReference type="GO" id="GO:0008270">
    <property type="term" value="F:zinc ion binding"/>
    <property type="evidence" value="ECO:0007669"/>
    <property type="project" value="UniProtKB-UniRule"/>
</dbReference>
<dbReference type="GO" id="GO:0006412">
    <property type="term" value="P:translation"/>
    <property type="evidence" value="ECO:0007669"/>
    <property type="project" value="UniProtKB-UniRule"/>
</dbReference>
<dbReference type="CDD" id="cd00472">
    <property type="entry name" value="Ribosomal_L24e_L24"/>
    <property type="match status" value="1"/>
</dbReference>
<dbReference type="Gene3D" id="2.30.170.20">
    <property type="entry name" value="Ribosomal protein L24e"/>
    <property type="match status" value="1"/>
</dbReference>
<dbReference type="HAMAP" id="MF_00773">
    <property type="entry name" value="Ribosomal_eL24"/>
    <property type="match status" value="1"/>
</dbReference>
<dbReference type="InterPro" id="IPR038630">
    <property type="entry name" value="L24e/L24_sf"/>
</dbReference>
<dbReference type="InterPro" id="IPR055345">
    <property type="entry name" value="Ribosomal_eL24-rel_arc"/>
</dbReference>
<dbReference type="InterPro" id="IPR000988">
    <property type="entry name" value="Ribosomal_eL24-rel_N"/>
</dbReference>
<dbReference type="InterPro" id="IPR023442">
    <property type="entry name" value="Ribosomal_eL24_CS"/>
</dbReference>
<dbReference type="InterPro" id="IPR011017">
    <property type="entry name" value="TRASH_dom"/>
</dbReference>
<dbReference type="NCBIfam" id="NF034186">
    <property type="entry name" value="PRK14891.1-1"/>
    <property type="match status" value="1"/>
</dbReference>
<dbReference type="Pfam" id="PF01246">
    <property type="entry name" value="Ribosomal_L24e"/>
    <property type="match status" value="1"/>
</dbReference>
<dbReference type="SMART" id="SM00746">
    <property type="entry name" value="TRASH"/>
    <property type="match status" value="1"/>
</dbReference>
<dbReference type="SUPFAM" id="SSF57716">
    <property type="entry name" value="Glucocorticoid receptor-like (DNA-binding domain)"/>
    <property type="match status" value="1"/>
</dbReference>
<dbReference type="PROSITE" id="PS01073">
    <property type="entry name" value="RIBOSOMAL_L24E"/>
    <property type="match status" value="1"/>
</dbReference>
<proteinExistence type="inferred from homology"/>
<reference key="1">
    <citation type="submission" date="2007-10" db="EMBL/GenBank/DDBJ databases">
        <title>Complete sequence of Caldivirga maquilingensis IC-167.</title>
        <authorList>
            <consortium name="US DOE Joint Genome Institute"/>
            <person name="Copeland A."/>
            <person name="Lucas S."/>
            <person name="Lapidus A."/>
            <person name="Barry K."/>
            <person name="Glavina del Rio T."/>
            <person name="Dalin E."/>
            <person name="Tice H."/>
            <person name="Pitluck S."/>
            <person name="Saunders E."/>
            <person name="Brettin T."/>
            <person name="Bruce D."/>
            <person name="Detter J.C."/>
            <person name="Han C."/>
            <person name="Schmutz J."/>
            <person name="Larimer F."/>
            <person name="Land M."/>
            <person name="Hauser L."/>
            <person name="Kyrpides N."/>
            <person name="Ivanova N."/>
            <person name="Biddle J.F."/>
            <person name="Zhang Z."/>
            <person name="Fitz-Gibbon S.T."/>
            <person name="Lowe T.M."/>
            <person name="Saltikov C."/>
            <person name="House C.H."/>
            <person name="Richardson P."/>
        </authorList>
    </citation>
    <scope>NUCLEOTIDE SEQUENCE [LARGE SCALE GENOMIC DNA]</scope>
    <source>
        <strain>ATCC 700844 / DSM 13496 / JCM 10307 / IC-167</strain>
    </source>
</reference>
<accession>A8MB69</accession>
<comment type="function">
    <text evidence="1">Binds to the 23S rRNA.</text>
</comment>
<comment type="cofactor">
    <cofactor evidence="1">
        <name>Zn(2+)</name>
        <dbReference type="ChEBI" id="CHEBI:29105"/>
    </cofactor>
    <text evidence="1">Binds 1 zinc ion per subunit.</text>
</comment>
<comment type="subunit">
    <text evidence="1">Part of the 50S ribosomal subunit. Forms a cluster with proteins L3 and L14.</text>
</comment>
<comment type="similarity">
    <text evidence="1">Belongs to the eukaryotic ribosomal protein eL24 family.</text>
</comment>
<sequence length="70" mass="8034">MRIYNCSYCGRPIPPGYGIMYVRVDGVVLRFCSRRCFVSMVKMGKNPQKQAWVRKIRRAKSAAQSKSSSK</sequence>